<dbReference type="EC" id="2.7.7.3" evidence="1"/>
<dbReference type="EMBL" id="CU928163">
    <property type="protein sequence ID" value="CAR15289.1"/>
    <property type="molecule type" value="Genomic_DNA"/>
</dbReference>
<dbReference type="RefSeq" id="WP_001171873.1">
    <property type="nucleotide sequence ID" value="NC_011751.1"/>
</dbReference>
<dbReference type="RefSeq" id="YP_002414787.1">
    <property type="nucleotide sequence ID" value="NC_011751.1"/>
</dbReference>
<dbReference type="SMR" id="B7NET8"/>
<dbReference type="STRING" id="585056.ECUMN_4148"/>
<dbReference type="GeneID" id="75173828"/>
<dbReference type="KEGG" id="eum:ECUMN_4148"/>
<dbReference type="PATRIC" id="fig|585056.7.peg.4323"/>
<dbReference type="HOGENOM" id="CLU_100149_0_1_6"/>
<dbReference type="UniPathway" id="UPA00241">
    <property type="reaction ID" value="UER00355"/>
</dbReference>
<dbReference type="Proteomes" id="UP000007097">
    <property type="component" value="Chromosome"/>
</dbReference>
<dbReference type="GO" id="GO:0005737">
    <property type="term" value="C:cytoplasm"/>
    <property type="evidence" value="ECO:0007669"/>
    <property type="project" value="UniProtKB-SubCell"/>
</dbReference>
<dbReference type="GO" id="GO:0005524">
    <property type="term" value="F:ATP binding"/>
    <property type="evidence" value="ECO:0007669"/>
    <property type="project" value="UniProtKB-KW"/>
</dbReference>
<dbReference type="GO" id="GO:0004595">
    <property type="term" value="F:pantetheine-phosphate adenylyltransferase activity"/>
    <property type="evidence" value="ECO:0007669"/>
    <property type="project" value="UniProtKB-UniRule"/>
</dbReference>
<dbReference type="GO" id="GO:0015937">
    <property type="term" value="P:coenzyme A biosynthetic process"/>
    <property type="evidence" value="ECO:0007669"/>
    <property type="project" value="UniProtKB-UniRule"/>
</dbReference>
<dbReference type="CDD" id="cd02163">
    <property type="entry name" value="PPAT"/>
    <property type="match status" value="1"/>
</dbReference>
<dbReference type="FunFam" id="3.40.50.620:FF:000012">
    <property type="entry name" value="Phosphopantetheine adenylyltransferase"/>
    <property type="match status" value="1"/>
</dbReference>
<dbReference type="Gene3D" id="3.40.50.620">
    <property type="entry name" value="HUPs"/>
    <property type="match status" value="1"/>
</dbReference>
<dbReference type="HAMAP" id="MF_00151">
    <property type="entry name" value="PPAT_bact"/>
    <property type="match status" value="1"/>
</dbReference>
<dbReference type="InterPro" id="IPR004821">
    <property type="entry name" value="Cyt_trans-like"/>
</dbReference>
<dbReference type="InterPro" id="IPR001980">
    <property type="entry name" value="PPAT"/>
</dbReference>
<dbReference type="InterPro" id="IPR014729">
    <property type="entry name" value="Rossmann-like_a/b/a_fold"/>
</dbReference>
<dbReference type="NCBIfam" id="TIGR01510">
    <property type="entry name" value="coaD_prev_kdtB"/>
    <property type="match status" value="1"/>
</dbReference>
<dbReference type="NCBIfam" id="TIGR00125">
    <property type="entry name" value="cyt_tran_rel"/>
    <property type="match status" value="1"/>
</dbReference>
<dbReference type="PANTHER" id="PTHR21342">
    <property type="entry name" value="PHOSPHOPANTETHEINE ADENYLYLTRANSFERASE"/>
    <property type="match status" value="1"/>
</dbReference>
<dbReference type="PANTHER" id="PTHR21342:SF1">
    <property type="entry name" value="PHOSPHOPANTETHEINE ADENYLYLTRANSFERASE"/>
    <property type="match status" value="1"/>
</dbReference>
<dbReference type="Pfam" id="PF01467">
    <property type="entry name" value="CTP_transf_like"/>
    <property type="match status" value="1"/>
</dbReference>
<dbReference type="PRINTS" id="PR01020">
    <property type="entry name" value="LPSBIOSNTHSS"/>
</dbReference>
<dbReference type="SUPFAM" id="SSF52374">
    <property type="entry name" value="Nucleotidylyl transferase"/>
    <property type="match status" value="1"/>
</dbReference>
<comment type="function">
    <text evidence="1">Reversibly transfers an adenylyl group from ATP to 4'-phosphopantetheine, yielding dephospho-CoA (dPCoA) and pyrophosphate.</text>
</comment>
<comment type="catalytic activity">
    <reaction evidence="1">
        <text>(R)-4'-phosphopantetheine + ATP + H(+) = 3'-dephospho-CoA + diphosphate</text>
        <dbReference type="Rhea" id="RHEA:19801"/>
        <dbReference type="ChEBI" id="CHEBI:15378"/>
        <dbReference type="ChEBI" id="CHEBI:30616"/>
        <dbReference type="ChEBI" id="CHEBI:33019"/>
        <dbReference type="ChEBI" id="CHEBI:57328"/>
        <dbReference type="ChEBI" id="CHEBI:61723"/>
        <dbReference type="EC" id="2.7.7.3"/>
    </reaction>
</comment>
<comment type="cofactor">
    <cofactor evidence="1">
        <name>Mg(2+)</name>
        <dbReference type="ChEBI" id="CHEBI:18420"/>
    </cofactor>
</comment>
<comment type="pathway">
    <text evidence="1">Cofactor biosynthesis; coenzyme A biosynthesis; CoA from (R)-pantothenate: step 4/5.</text>
</comment>
<comment type="subunit">
    <text evidence="1">Homohexamer.</text>
</comment>
<comment type="subcellular location">
    <subcellularLocation>
        <location evidence="1">Cytoplasm</location>
    </subcellularLocation>
</comment>
<comment type="similarity">
    <text evidence="1">Belongs to the bacterial CoaD family.</text>
</comment>
<gene>
    <name evidence="1" type="primary">coaD</name>
    <name type="ordered locus">ECUMN_4148</name>
</gene>
<protein>
    <recommendedName>
        <fullName evidence="1">Phosphopantetheine adenylyltransferase</fullName>
        <ecNumber evidence="1">2.7.7.3</ecNumber>
    </recommendedName>
    <alternativeName>
        <fullName evidence="1">Dephospho-CoA pyrophosphorylase</fullName>
    </alternativeName>
    <alternativeName>
        <fullName evidence="1">Pantetheine-phosphate adenylyltransferase</fullName>
        <shortName evidence="1">PPAT</shortName>
    </alternativeName>
</protein>
<feature type="chain" id="PRO_1000118079" description="Phosphopantetheine adenylyltransferase">
    <location>
        <begin position="1"/>
        <end position="159"/>
    </location>
</feature>
<feature type="binding site" evidence="1">
    <location>
        <begin position="10"/>
        <end position="11"/>
    </location>
    <ligand>
        <name>ATP</name>
        <dbReference type="ChEBI" id="CHEBI:30616"/>
    </ligand>
</feature>
<feature type="binding site" evidence="1">
    <location>
        <position position="10"/>
    </location>
    <ligand>
        <name>substrate</name>
    </ligand>
</feature>
<feature type="binding site" evidence="1">
    <location>
        <position position="18"/>
    </location>
    <ligand>
        <name>ATP</name>
        <dbReference type="ChEBI" id="CHEBI:30616"/>
    </ligand>
</feature>
<feature type="binding site" evidence="1">
    <location>
        <position position="42"/>
    </location>
    <ligand>
        <name>substrate</name>
    </ligand>
</feature>
<feature type="binding site" evidence="1">
    <location>
        <position position="74"/>
    </location>
    <ligand>
        <name>substrate</name>
    </ligand>
</feature>
<feature type="binding site" evidence="1">
    <location>
        <position position="88"/>
    </location>
    <ligand>
        <name>substrate</name>
    </ligand>
</feature>
<feature type="binding site" evidence="1">
    <location>
        <begin position="89"/>
        <end position="91"/>
    </location>
    <ligand>
        <name>ATP</name>
        <dbReference type="ChEBI" id="CHEBI:30616"/>
    </ligand>
</feature>
<feature type="binding site" evidence="1">
    <location>
        <position position="99"/>
    </location>
    <ligand>
        <name>ATP</name>
        <dbReference type="ChEBI" id="CHEBI:30616"/>
    </ligand>
</feature>
<feature type="binding site" evidence="1">
    <location>
        <begin position="124"/>
        <end position="130"/>
    </location>
    <ligand>
        <name>ATP</name>
        <dbReference type="ChEBI" id="CHEBI:30616"/>
    </ligand>
</feature>
<feature type="site" description="Transition state stabilizer" evidence="1">
    <location>
        <position position="18"/>
    </location>
</feature>
<accession>B7NET8</accession>
<evidence type="ECO:0000255" key="1">
    <source>
        <dbReference type="HAMAP-Rule" id="MF_00151"/>
    </source>
</evidence>
<keyword id="KW-0067">ATP-binding</keyword>
<keyword id="KW-0173">Coenzyme A biosynthesis</keyword>
<keyword id="KW-0963">Cytoplasm</keyword>
<keyword id="KW-0460">Magnesium</keyword>
<keyword id="KW-0547">Nucleotide-binding</keyword>
<keyword id="KW-0548">Nucleotidyltransferase</keyword>
<keyword id="KW-0808">Transferase</keyword>
<sequence length="159" mass="17895">MQKRAIYPGTFDPITNGHIDIVTRATQMFDHVILAIAASPSKKPMFTLEERVELAQQATAHLGNVEVVGFSDLMANFARNQHATVLIRGLRAVADFEYEMQLAHMNRHLMPELESVFLMPSKEWSFISSSLVKEVARHQGDVTHFLPENVHQALMAKLA</sequence>
<reference key="1">
    <citation type="journal article" date="2009" name="PLoS Genet.">
        <title>Organised genome dynamics in the Escherichia coli species results in highly diverse adaptive paths.</title>
        <authorList>
            <person name="Touchon M."/>
            <person name="Hoede C."/>
            <person name="Tenaillon O."/>
            <person name="Barbe V."/>
            <person name="Baeriswyl S."/>
            <person name="Bidet P."/>
            <person name="Bingen E."/>
            <person name="Bonacorsi S."/>
            <person name="Bouchier C."/>
            <person name="Bouvet O."/>
            <person name="Calteau A."/>
            <person name="Chiapello H."/>
            <person name="Clermont O."/>
            <person name="Cruveiller S."/>
            <person name="Danchin A."/>
            <person name="Diard M."/>
            <person name="Dossat C."/>
            <person name="Karoui M.E."/>
            <person name="Frapy E."/>
            <person name="Garry L."/>
            <person name="Ghigo J.M."/>
            <person name="Gilles A.M."/>
            <person name="Johnson J."/>
            <person name="Le Bouguenec C."/>
            <person name="Lescat M."/>
            <person name="Mangenot S."/>
            <person name="Martinez-Jehanne V."/>
            <person name="Matic I."/>
            <person name="Nassif X."/>
            <person name="Oztas S."/>
            <person name="Petit M.A."/>
            <person name="Pichon C."/>
            <person name="Rouy Z."/>
            <person name="Ruf C.S."/>
            <person name="Schneider D."/>
            <person name="Tourret J."/>
            <person name="Vacherie B."/>
            <person name="Vallenet D."/>
            <person name="Medigue C."/>
            <person name="Rocha E.P.C."/>
            <person name="Denamur E."/>
        </authorList>
    </citation>
    <scope>NUCLEOTIDE SEQUENCE [LARGE SCALE GENOMIC DNA]</scope>
    <source>
        <strain>UMN026 / ExPEC</strain>
    </source>
</reference>
<proteinExistence type="inferred from homology"/>
<name>COAD_ECOLU</name>
<organism>
    <name type="scientific">Escherichia coli O17:K52:H18 (strain UMN026 / ExPEC)</name>
    <dbReference type="NCBI Taxonomy" id="585056"/>
    <lineage>
        <taxon>Bacteria</taxon>
        <taxon>Pseudomonadati</taxon>
        <taxon>Pseudomonadota</taxon>
        <taxon>Gammaproteobacteria</taxon>
        <taxon>Enterobacterales</taxon>
        <taxon>Enterobacteriaceae</taxon>
        <taxon>Escherichia</taxon>
    </lineage>
</organism>